<proteinExistence type="inferred from homology"/>
<sequence>MIFATLEHILTHISFSIISIVITTHLMTFAREIAGLSDLSEKGMIAVFLRITGLLVTRWIYSGHLPLSNLYESLIFLSWGFSLIHMISKIQNHKNFLSSITAPSAILTQGFVTSGLLTEMHQSAILVPALQSHWLIMHVSMMLLSYAALLCGSLLSIALLVITFRKKLDIIFLLIRLFSFGEIQYLNEKRSILQNTSFSFRNYHKYQLTQQLDHWSYRVIGIGFTLLTLGILSGAVWANEAWGSYWNWDPKETWAFITWTISAIYLHTRTNKNLQSANSAIVASIGFLIIWICYFGVNLLGIGLHSYGSFALR</sequence>
<protein>
    <recommendedName>
        <fullName evidence="1">Cytochrome c biogenesis protein CcsA</fullName>
    </recommendedName>
</protein>
<gene>
    <name evidence="1" type="primary">ccsA</name>
</gene>
<comment type="function">
    <text evidence="1">Required during biogenesis of c-type cytochromes (cytochrome c6 and cytochrome f) at the step of heme attachment.</text>
</comment>
<comment type="subunit">
    <text evidence="1">May interact with Ccs1.</text>
</comment>
<comment type="subcellular location">
    <subcellularLocation>
        <location evidence="1">Plastid</location>
        <location evidence="1">Chloroplast thylakoid membrane</location>
        <topology evidence="1">Multi-pass membrane protein</topology>
    </subcellularLocation>
</comment>
<comment type="similarity">
    <text evidence="1">Belongs to the CcmF/CycK/Ccl1/NrfE/CcsA family.</text>
</comment>
<evidence type="ECO:0000255" key="1">
    <source>
        <dbReference type="HAMAP-Rule" id="MF_01391"/>
    </source>
</evidence>
<name>CCSA_AMBTC</name>
<organism>
    <name type="scientific">Amborella trichopoda</name>
    <dbReference type="NCBI Taxonomy" id="13333"/>
    <lineage>
        <taxon>Eukaryota</taxon>
        <taxon>Viridiplantae</taxon>
        <taxon>Streptophyta</taxon>
        <taxon>Embryophyta</taxon>
        <taxon>Tracheophyta</taxon>
        <taxon>Spermatophyta</taxon>
        <taxon>Magnoliopsida</taxon>
        <taxon>Amborellales</taxon>
        <taxon>Amborellaceae</taxon>
        <taxon>Amborella</taxon>
    </lineage>
</organism>
<feature type="chain" id="PRO_0000353730" description="Cytochrome c biogenesis protein CcsA">
    <location>
        <begin position="1"/>
        <end position="313"/>
    </location>
</feature>
<feature type="transmembrane region" description="Helical" evidence="1">
    <location>
        <begin position="13"/>
        <end position="35"/>
    </location>
</feature>
<feature type="transmembrane region" description="Helical" evidence="1">
    <location>
        <begin position="43"/>
        <end position="63"/>
    </location>
</feature>
<feature type="transmembrane region" description="Helical" evidence="1">
    <location>
        <begin position="67"/>
        <end position="87"/>
    </location>
</feature>
<feature type="transmembrane region" description="Helical" evidence="1">
    <location>
        <begin position="96"/>
        <end position="116"/>
    </location>
</feature>
<feature type="transmembrane region" description="Helical" evidence="1">
    <location>
        <begin position="142"/>
        <end position="162"/>
    </location>
</feature>
<feature type="transmembrane region" description="Helical" evidence="1">
    <location>
        <begin position="219"/>
        <end position="239"/>
    </location>
</feature>
<feature type="transmembrane region" description="Helical" evidence="1">
    <location>
        <begin position="252"/>
        <end position="269"/>
    </location>
</feature>
<feature type="transmembrane region" description="Helical" evidence="1">
    <location>
        <begin position="280"/>
        <end position="300"/>
    </location>
</feature>
<dbReference type="EMBL" id="AJ506156">
    <property type="protein sequence ID" value="CAD45156.1"/>
    <property type="molecule type" value="Genomic_DNA"/>
</dbReference>
<dbReference type="RefSeq" id="NP_904148.1">
    <property type="nucleotide sequence ID" value="NC_005086.1"/>
</dbReference>
<dbReference type="SMR" id="Q70XW4"/>
<dbReference type="STRING" id="13333.Q70XW4"/>
<dbReference type="GeneID" id="2546501"/>
<dbReference type="KEGG" id="atr:2546501"/>
<dbReference type="OrthoDB" id="1640at2759"/>
<dbReference type="Proteomes" id="UP000017836">
    <property type="component" value="Chloroplast"/>
</dbReference>
<dbReference type="GO" id="GO:0009535">
    <property type="term" value="C:chloroplast thylakoid membrane"/>
    <property type="evidence" value="ECO:0007669"/>
    <property type="project" value="UniProtKB-SubCell"/>
</dbReference>
<dbReference type="GO" id="GO:0020037">
    <property type="term" value="F:heme binding"/>
    <property type="evidence" value="ECO:0007669"/>
    <property type="project" value="InterPro"/>
</dbReference>
<dbReference type="GO" id="GO:0017004">
    <property type="term" value="P:cytochrome complex assembly"/>
    <property type="evidence" value="ECO:0007669"/>
    <property type="project" value="UniProtKB-UniRule"/>
</dbReference>
<dbReference type="HAMAP" id="MF_01391">
    <property type="entry name" value="CytC_CcsA"/>
    <property type="match status" value="1"/>
</dbReference>
<dbReference type="InterPro" id="IPR002541">
    <property type="entry name" value="Cyt_c_assembly"/>
</dbReference>
<dbReference type="InterPro" id="IPR017562">
    <property type="entry name" value="Cyt_c_biogenesis_CcsA"/>
</dbReference>
<dbReference type="InterPro" id="IPR045062">
    <property type="entry name" value="Cyt_c_biogenesis_CcsA/CcmC"/>
</dbReference>
<dbReference type="NCBIfam" id="TIGR03144">
    <property type="entry name" value="cytochr_II_ccsB"/>
    <property type="match status" value="1"/>
</dbReference>
<dbReference type="PANTHER" id="PTHR30071:SF1">
    <property type="entry name" value="CYTOCHROME B_B6 PROTEIN-RELATED"/>
    <property type="match status" value="1"/>
</dbReference>
<dbReference type="PANTHER" id="PTHR30071">
    <property type="entry name" value="HEME EXPORTER PROTEIN C"/>
    <property type="match status" value="1"/>
</dbReference>
<dbReference type="Pfam" id="PF01578">
    <property type="entry name" value="Cytochrom_C_asm"/>
    <property type="match status" value="1"/>
</dbReference>
<keyword id="KW-0150">Chloroplast</keyword>
<keyword id="KW-0201">Cytochrome c-type biogenesis</keyword>
<keyword id="KW-0472">Membrane</keyword>
<keyword id="KW-0934">Plastid</keyword>
<keyword id="KW-1185">Reference proteome</keyword>
<keyword id="KW-0793">Thylakoid</keyword>
<keyword id="KW-0812">Transmembrane</keyword>
<keyword id="KW-1133">Transmembrane helix</keyword>
<reference key="1">
    <citation type="journal article" date="2003" name="Mol. Biol. Evol.">
        <title>Analysis of the Amborella trichopoda chloroplast genome sequence suggests that Amborella is not a basal angiosperm.</title>
        <authorList>
            <person name="Goremykin V.V."/>
            <person name="Hirsch-Ernst K.I."/>
            <person name="Wolfl S."/>
            <person name="Hellwig F.H."/>
        </authorList>
    </citation>
    <scope>NUCLEOTIDE SEQUENCE [LARGE SCALE GENOMIC DNA]</scope>
</reference>
<geneLocation type="chloroplast"/>
<accession>Q70XW4</accession>